<gene>
    <name type="primary">PUT2</name>
    <name type="ordered locus">YHR037W</name>
</gene>
<accession>P07275</accession>
<accession>D3DKY4</accession>
<name>PUT2_YEAST</name>
<evidence type="ECO:0000250" key="1"/>
<evidence type="ECO:0000255" key="2"/>
<evidence type="ECO:0000255" key="3">
    <source>
        <dbReference type="PROSITE-ProRule" id="PRU10007"/>
    </source>
</evidence>
<evidence type="ECO:0000255" key="4">
    <source>
        <dbReference type="PROSITE-ProRule" id="PRU10008"/>
    </source>
</evidence>
<evidence type="ECO:0000269" key="5">
    <source>
    </source>
</evidence>
<evidence type="ECO:0000269" key="6">
    <source>
    </source>
</evidence>
<evidence type="ECO:0000305" key="7"/>
<evidence type="ECO:0007829" key="8">
    <source>
        <dbReference type="PDB" id="4OE6"/>
    </source>
</evidence>
<dbReference type="EC" id="1.2.1.88"/>
<dbReference type="EMBL" id="M10029">
    <property type="protein sequence ID" value="AAA34924.1"/>
    <property type="molecule type" value="Genomic_DNA"/>
</dbReference>
<dbReference type="EMBL" id="M22785">
    <property type="status" value="NOT_ANNOTATED_CDS"/>
    <property type="molecule type" value="Genomic_DNA"/>
</dbReference>
<dbReference type="EMBL" id="U00062">
    <property type="protein sequence ID" value="AAB68907.1"/>
    <property type="molecule type" value="Genomic_DNA"/>
</dbReference>
<dbReference type="EMBL" id="BK006934">
    <property type="protein sequence ID" value="DAA06728.1"/>
    <property type="molecule type" value="Genomic_DNA"/>
</dbReference>
<dbReference type="PIR" id="S46738">
    <property type="entry name" value="RDBYC"/>
</dbReference>
<dbReference type="RefSeq" id="NP_011902.1">
    <property type="nucleotide sequence ID" value="NM_001179167.1"/>
</dbReference>
<dbReference type="PDB" id="4OE4">
    <property type="method" value="X-ray"/>
    <property type="resolution" value="2.17 A"/>
    <property type="chains" value="A/B=23-575"/>
</dbReference>
<dbReference type="PDB" id="4OE6">
    <property type="method" value="X-ray"/>
    <property type="resolution" value="1.95 A"/>
    <property type="chains" value="A/B=23-575"/>
</dbReference>
<dbReference type="PDBsum" id="4OE4"/>
<dbReference type="PDBsum" id="4OE6"/>
<dbReference type="SMR" id="P07275"/>
<dbReference type="BioGRID" id="36468">
    <property type="interactions" value="123"/>
</dbReference>
<dbReference type="FunCoup" id="P07275">
    <property type="interactions" value="489"/>
</dbReference>
<dbReference type="IntAct" id="P07275">
    <property type="interactions" value="9"/>
</dbReference>
<dbReference type="STRING" id="4932.YHR037W"/>
<dbReference type="iPTMnet" id="P07275"/>
<dbReference type="PaxDb" id="4932-YHR037W"/>
<dbReference type="PeptideAtlas" id="P07275"/>
<dbReference type="EnsemblFungi" id="YHR037W_mRNA">
    <property type="protein sequence ID" value="YHR037W"/>
    <property type="gene ID" value="YHR037W"/>
</dbReference>
<dbReference type="GeneID" id="856432"/>
<dbReference type="KEGG" id="sce:YHR037W"/>
<dbReference type="AGR" id="SGD:S000001079"/>
<dbReference type="SGD" id="S000001079">
    <property type="gene designation" value="PUT2"/>
</dbReference>
<dbReference type="VEuPathDB" id="FungiDB:YHR037W"/>
<dbReference type="eggNOG" id="KOG2455">
    <property type="taxonomic scope" value="Eukaryota"/>
</dbReference>
<dbReference type="GeneTree" id="ENSGT00560000077335"/>
<dbReference type="HOGENOM" id="CLU_005391_4_1_1"/>
<dbReference type="InParanoid" id="P07275"/>
<dbReference type="OMA" id="FAGIHFT"/>
<dbReference type="OrthoDB" id="5322683at2759"/>
<dbReference type="BioCyc" id="MetaCyc:YHR037W-MONOMER"/>
<dbReference type="BioCyc" id="YEAST:YHR037W-MONOMER"/>
<dbReference type="BRENDA" id="1.2.1.88">
    <property type="organism ID" value="984"/>
</dbReference>
<dbReference type="UniPathway" id="UPA00261">
    <property type="reaction ID" value="UER00374"/>
</dbReference>
<dbReference type="BioGRID-ORCS" id="856432">
    <property type="hits" value="0 hits in 10 CRISPR screens"/>
</dbReference>
<dbReference type="EvolutionaryTrace" id="P07275"/>
<dbReference type="PRO" id="PR:P07275"/>
<dbReference type="Proteomes" id="UP000002311">
    <property type="component" value="Chromosome VIII"/>
</dbReference>
<dbReference type="RNAct" id="P07275">
    <property type="molecule type" value="protein"/>
</dbReference>
<dbReference type="GO" id="GO:0005743">
    <property type="term" value="C:mitochondrial inner membrane"/>
    <property type="evidence" value="ECO:0007669"/>
    <property type="project" value="UniProtKB-SubCell"/>
</dbReference>
<dbReference type="GO" id="GO:0005759">
    <property type="term" value="C:mitochondrial matrix"/>
    <property type="evidence" value="ECO:0000314"/>
    <property type="project" value="SGD"/>
</dbReference>
<dbReference type="GO" id="GO:0005739">
    <property type="term" value="C:mitochondrion"/>
    <property type="evidence" value="ECO:0007005"/>
    <property type="project" value="SGD"/>
</dbReference>
<dbReference type="GO" id="GO:0003842">
    <property type="term" value="F:1-pyrroline-5-carboxylate dehydrogenase activity"/>
    <property type="evidence" value="ECO:0000314"/>
    <property type="project" value="SGD"/>
</dbReference>
<dbReference type="GO" id="GO:0006537">
    <property type="term" value="P:glutamate biosynthetic process"/>
    <property type="evidence" value="ECO:0000314"/>
    <property type="project" value="SGD"/>
</dbReference>
<dbReference type="GO" id="GO:0010133">
    <property type="term" value="P:proline catabolic process to glutamate"/>
    <property type="evidence" value="ECO:0000315"/>
    <property type="project" value="SGD"/>
</dbReference>
<dbReference type="FunFam" id="3.40.605.10:FF:000006">
    <property type="entry name" value="1-pyrroline-5-carboxylate dehydrogenase"/>
    <property type="match status" value="1"/>
</dbReference>
<dbReference type="FunFam" id="3.40.309.10:FF:000005">
    <property type="entry name" value="1-pyrroline-5-carboxylate dehydrogenase 1"/>
    <property type="match status" value="1"/>
</dbReference>
<dbReference type="Gene3D" id="3.40.605.10">
    <property type="entry name" value="Aldehyde Dehydrogenase, Chain A, domain 1"/>
    <property type="match status" value="1"/>
</dbReference>
<dbReference type="Gene3D" id="3.40.309.10">
    <property type="entry name" value="Aldehyde Dehydrogenase, Chain A, domain 2"/>
    <property type="match status" value="1"/>
</dbReference>
<dbReference type="InterPro" id="IPR016161">
    <property type="entry name" value="Ald_DH/histidinol_DH"/>
</dbReference>
<dbReference type="InterPro" id="IPR016163">
    <property type="entry name" value="Ald_DH_C"/>
</dbReference>
<dbReference type="InterPro" id="IPR016160">
    <property type="entry name" value="Ald_DH_CS_CYS"/>
</dbReference>
<dbReference type="InterPro" id="IPR029510">
    <property type="entry name" value="Ald_DH_CS_GLU"/>
</dbReference>
<dbReference type="InterPro" id="IPR016162">
    <property type="entry name" value="Ald_DH_N"/>
</dbReference>
<dbReference type="InterPro" id="IPR015590">
    <property type="entry name" value="Aldehyde_DH_dom"/>
</dbReference>
<dbReference type="InterPro" id="IPR005931">
    <property type="entry name" value="P5CDH/ALDH4A1"/>
</dbReference>
<dbReference type="InterPro" id="IPR050485">
    <property type="entry name" value="Proline_metab_enzyme"/>
</dbReference>
<dbReference type="NCBIfam" id="TIGR01236">
    <property type="entry name" value="D1pyr5carbox1"/>
    <property type="match status" value="1"/>
</dbReference>
<dbReference type="PANTHER" id="PTHR42862">
    <property type="entry name" value="DELTA-1-PYRROLINE-5-CARBOXYLATE DEHYDROGENASE 1, ISOFORM A-RELATED"/>
    <property type="match status" value="1"/>
</dbReference>
<dbReference type="PANTHER" id="PTHR42862:SF1">
    <property type="entry name" value="DELTA-1-PYRROLINE-5-CARBOXYLATE DEHYDROGENASE 2, ISOFORM A-RELATED"/>
    <property type="match status" value="1"/>
</dbReference>
<dbReference type="Pfam" id="PF00171">
    <property type="entry name" value="Aldedh"/>
    <property type="match status" value="1"/>
</dbReference>
<dbReference type="SUPFAM" id="SSF53720">
    <property type="entry name" value="ALDH-like"/>
    <property type="match status" value="1"/>
</dbReference>
<dbReference type="PROSITE" id="PS00070">
    <property type="entry name" value="ALDEHYDE_DEHYDR_CYS"/>
    <property type="match status" value="1"/>
</dbReference>
<dbReference type="PROSITE" id="PS00687">
    <property type="entry name" value="ALDEHYDE_DEHYDR_GLU"/>
    <property type="match status" value="1"/>
</dbReference>
<comment type="catalytic activity">
    <reaction>
        <text>L-glutamate 5-semialdehyde + NAD(+) + H2O = L-glutamate + NADH + 2 H(+)</text>
        <dbReference type="Rhea" id="RHEA:30235"/>
        <dbReference type="ChEBI" id="CHEBI:15377"/>
        <dbReference type="ChEBI" id="CHEBI:15378"/>
        <dbReference type="ChEBI" id="CHEBI:29985"/>
        <dbReference type="ChEBI" id="CHEBI:57540"/>
        <dbReference type="ChEBI" id="CHEBI:57945"/>
        <dbReference type="ChEBI" id="CHEBI:58066"/>
        <dbReference type="EC" id="1.2.1.88"/>
    </reaction>
</comment>
<comment type="pathway">
    <text>Amino-acid degradation; L-proline degradation into L-glutamate; L-glutamate from L-proline: step 2/2.</text>
</comment>
<comment type="interaction">
    <interactant intactId="EBI-14303">
        <id>P07275</id>
    </interactant>
    <interactant intactId="EBI-8603">
        <id>P10592</id>
        <label>SSA2</label>
    </interactant>
    <organismsDiffer>false</organismsDiffer>
    <experiments>2</experiments>
</comment>
<comment type="subcellular location">
    <subcellularLocation>
        <location evidence="5">Mitochondrion inner membrane</location>
    </subcellularLocation>
</comment>
<comment type="induction">
    <text>By proline and is regulated by a common control element encoded by the PUT3 gene.</text>
</comment>
<comment type="miscellaneous">
    <text evidence="6">Present with 17200 molecules/cell in log phase SD medium.</text>
</comment>
<comment type="similarity">
    <text evidence="7">Belongs to the aldehyde dehydrogenase family.</text>
</comment>
<feature type="transit peptide" description="Mitochondrion" evidence="2">
    <location>
        <begin position="1"/>
        <end status="unknown"/>
    </location>
</feature>
<feature type="chain" id="PRO_0000007177" description="Delta-1-pyrroline-5-carboxylate dehydrogenase, mitochondrial">
    <location>
        <begin status="unknown"/>
        <end position="575"/>
    </location>
</feature>
<feature type="active site" description="Proton acceptor" evidence="3 4">
    <location>
        <position position="317"/>
    </location>
</feature>
<feature type="active site" description="Nucleophile" evidence="3 4">
    <location>
        <position position="351"/>
    </location>
</feature>
<feature type="binding site" evidence="1">
    <location>
        <begin position="297"/>
        <end position="302"/>
    </location>
    <ligand>
        <name>NAD(+)</name>
        <dbReference type="ChEBI" id="CHEBI:57540"/>
    </ligand>
</feature>
<feature type="site" description="Transition state stabilizer" evidence="1">
    <location>
        <position position="212"/>
    </location>
</feature>
<feature type="sequence conflict" description="In Ref. 1; AAA34924." evidence="7" ref="1">
    <original>ES</original>
    <variation>SR</variation>
    <location>
        <begin position="187"/>
        <end position="188"/>
    </location>
</feature>
<feature type="sequence conflict" description="In Ref. 1; AAA34924." evidence="7" ref="1">
    <original>P</original>
    <variation>L</variation>
    <location>
        <position position="264"/>
    </location>
</feature>
<feature type="sequence conflict" description="In Ref. 1; AAA34924." evidence="7" ref="1">
    <original>D</original>
    <variation>G</variation>
    <location>
        <position position="541"/>
    </location>
</feature>
<feature type="sequence conflict" description="In Ref. 1; AAA34924." evidence="7" ref="1">
    <original>N</original>
    <variation>S</variation>
    <location>
        <position position="561"/>
    </location>
</feature>
<feature type="helix" evidence="8">
    <location>
        <begin position="44"/>
        <end position="56"/>
    </location>
</feature>
<feature type="strand" evidence="8">
    <location>
        <begin position="59"/>
        <end position="61"/>
    </location>
</feature>
<feature type="strand" evidence="8">
    <location>
        <begin position="63"/>
        <end position="65"/>
    </location>
</feature>
<feature type="strand" evidence="8">
    <location>
        <begin position="68"/>
        <end position="70"/>
    </location>
</feature>
<feature type="turn" evidence="8">
    <location>
        <begin position="73"/>
        <end position="75"/>
    </location>
</feature>
<feature type="strand" evidence="8">
    <location>
        <begin position="78"/>
        <end position="83"/>
    </location>
</feature>
<feature type="strand" evidence="8">
    <location>
        <begin position="86"/>
        <end position="95"/>
    </location>
</feature>
<feature type="helix" evidence="8">
    <location>
        <begin position="99"/>
        <end position="117"/>
    </location>
</feature>
<feature type="helix" evidence="8">
    <location>
        <begin position="121"/>
        <end position="136"/>
    </location>
</feature>
<feature type="turn" evidence="8">
    <location>
        <begin position="137"/>
        <end position="139"/>
    </location>
</feature>
<feature type="helix" evidence="8">
    <location>
        <begin position="140"/>
        <end position="151"/>
    </location>
</feature>
<feature type="helix" evidence="8">
    <location>
        <begin position="155"/>
        <end position="162"/>
    </location>
</feature>
<feature type="helix" evidence="8">
    <location>
        <begin position="164"/>
        <end position="180"/>
    </location>
</feature>
<feature type="strand" evidence="8">
    <location>
        <begin position="193"/>
        <end position="200"/>
    </location>
</feature>
<feature type="strand" evidence="8">
    <location>
        <begin position="202"/>
        <end position="208"/>
    </location>
</feature>
<feature type="helix" evidence="8">
    <location>
        <begin position="214"/>
        <end position="226"/>
    </location>
</feature>
<feature type="strand" evidence="8">
    <location>
        <begin position="231"/>
        <end position="234"/>
    </location>
</feature>
<feature type="helix" evidence="8">
    <location>
        <begin position="237"/>
        <end position="239"/>
    </location>
</feature>
<feature type="helix" evidence="8">
    <location>
        <begin position="240"/>
        <end position="252"/>
    </location>
</feature>
<feature type="strand" evidence="8">
    <location>
        <begin position="259"/>
        <end position="262"/>
    </location>
</feature>
<feature type="helix" evidence="8">
    <location>
        <begin position="267"/>
        <end position="274"/>
    </location>
</feature>
<feature type="strand" evidence="8">
    <location>
        <begin position="280"/>
        <end position="287"/>
    </location>
</feature>
<feature type="helix" evidence="8">
    <location>
        <begin position="289"/>
        <end position="305"/>
    </location>
</feature>
<feature type="strand" evidence="8">
    <location>
        <begin position="313"/>
        <end position="317"/>
    </location>
</feature>
<feature type="strand" evidence="8">
    <location>
        <begin position="322"/>
        <end position="326"/>
    </location>
</feature>
<feature type="helix" evidence="8">
    <location>
        <begin position="332"/>
        <end position="344"/>
    </location>
</feature>
<feature type="helix" evidence="8">
    <location>
        <begin position="345"/>
        <end position="348"/>
    </location>
</feature>
<feature type="strand" evidence="8">
    <location>
        <begin position="354"/>
        <end position="360"/>
    </location>
</feature>
<feature type="helix" evidence="8">
    <location>
        <begin position="361"/>
        <end position="377"/>
    </location>
</feature>
<feature type="helix" evidence="8">
    <location>
        <begin position="405"/>
        <end position="418"/>
    </location>
</feature>
<feature type="strand" evidence="8">
    <location>
        <begin position="424"/>
        <end position="428"/>
    </location>
</feature>
<feature type="strand" evidence="8">
    <location>
        <begin position="435"/>
        <end position="437"/>
    </location>
</feature>
<feature type="strand" evidence="8">
    <location>
        <begin position="443"/>
        <end position="449"/>
    </location>
</feature>
<feature type="helix" evidence="8">
    <location>
        <begin position="453"/>
        <end position="455"/>
    </location>
</feature>
<feature type="strand" evidence="8">
    <location>
        <begin position="461"/>
        <end position="469"/>
    </location>
</feature>
<feature type="helix" evidence="8">
    <location>
        <begin position="471"/>
        <end position="473"/>
    </location>
</feature>
<feature type="helix" evidence="8">
    <location>
        <begin position="474"/>
        <end position="483"/>
    </location>
</feature>
<feature type="strand" evidence="8">
    <location>
        <begin position="489"/>
        <end position="494"/>
    </location>
</feature>
<feature type="helix" evidence="8">
    <location>
        <begin position="498"/>
        <end position="507"/>
    </location>
</feature>
<feature type="turn" evidence="8">
    <location>
        <begin position="508"/>
        <end position="510"/>
    </location>
</feature>
<feature type="strand" evidence="8">
    <location>
        <begin position="513"/>
        <end position="519"/>
    </location>
</feature>
<feature type="helix" evidence="8">
    <location>
        <begin position="548"/>
        <end position="552"/>
    </location>
</feature>
<feature type="strand" evidence="8">
    <location>
        <begin position="553"/>
        <end position="560"/>
    </location>
</feature>
<sequence length="575" mass="64435">MLSARCLKSIYFKRSFSQLGHIKPPKHIRNEPVKPFRNIDLKDWDLLRASLMKFKSSSLEVPLVINGERIYDNNERALFPQTNPANHQQVLANVTQATEKDVMNAVKAAKDAKKDWYNLPFYDRSAIFLKAADLISTKYRYDMLAATMLGQGKNVYQAEIDCITELSDFFRYYVKYASDLYAQQPVESADGTWNKAEYRPLEGFVYAVSPFNFTAIAANLIGAPALMGNTVVWKPSQTAALSNYLLMTVLEEAGLPKGVINFIPGDPVQVTDQVLADKDFGALHFTGSTNVFKSLYGKIQSGVVEGKYRDYPRIIGETGGKNFHLVHPSANISHAVLSTIRGTFEFQGQKCSAASRLYLPESKSEEFLSDMFGILQSQNVVPMNTSASPISGGNLRGFMGPVIHEQSFDKLVKVIEDAKKDPELEILYGGQYDKSQGWFVGPTVIKAKRPDHPYMSTEFFGPILTVYEYPDTEFNEICDIIDNTSQYALTGAIFAKDRKAIEYADEKLKFSAGNFYINDKCTGAVVSQQWFGGARMSGTDDKAGGPNILSRFVSIRNTKENFYELTDFKYPSNYE</sequence>
<organism>
    <name type="scientific">Saccharomyces cerevisiae (strain ATCC 204508 / S288c)</name>
    <name type="common">Baker's yeast</name>
    <dbReference type="NCBI Taxonomy" id="559292"/>
    <lineage>
        <taxon>Eukaryota</taxon>
        <taxon>Fungi</taxon>
        <taxon>Dikarya</taxon>
        <taxon>Ascomycota</taxon>
        <taxon>Saccharomycotina</taxon>
        <taxon>Saccharomycetes</taxon>
        <taxon>Saccharomycetales</taxon>
        <taxon>Saccharomycetaceae</taxon>
        <taxon>Saccharomyces</taxon>
    </lineage>
</organism>
<keyword id="KW-0002">3D-structure</keyword>
<keyword id="KW-0472">Membrane</keyword>
<keyword id="KW-0496">Mitochondrion</keyword>
<keyword id="KW-0999">Mitochondrion inner membrane</keyword>
<keyword id="KW-0520">NAD</keyword>
<keyword id="KW-0560">Oxidoreductase</keyword>
<keyword id="KW-0642">Proline metabolism</keyword>
<keyword id="KW-1185">Reference proteome</keyword>
<keyword id="KW-0809">Transit peptide</keyword>
<reference key="1">
    <citation type="journal article" date="1984" name="Mol. Cell. Biol.">
        <title>Primary structure of the nuclear PUT2 gene involved in the mitochondrial pathway for proline utilization in Saccharomyces cerevisiae.</title>
        <authorList>
            <person name="Krzywicki K.A."/>
            <person name="Brandriss M.C."/>
        </authorList>
    </citation>
    <scope>NUCLEOTIDE SEQUENCE [GENOMIC DNA]</scope>
</reference>
<reference key="2">
    <citation type="journal article" date="1994" name="Science">
        <title>Complete nucleotide sequence of Saccharomyces cerevisiae chromosome VIII.</title>
        <authorList>
            <person name="Johnston M."/>
            <person name="Andrews S."/>
            <person name="Brinkman R."/>
            <person name="Cooper J."/>
            <person name="Ding H."/>
            <person name="Dover J."/>
            <person name="Du Z."/>
            <person name="Favello A."/>
            <person name="Fulton L."/>
            <person name="Gattung S."/>
            <person name="Geisel C."/>
            <person name="Kirsten J."/>
            <person name="Kucaba T."/>
            <person name="Hillier L.W."/>
            <person name="Jier M."/>
            <person name="Johnston L."/>
            <person name="Langston Y."/>
            <person name="Latreille P."/>
            <person name="Louis E.J."/>
            <person name="Macri C."/>
            <person name="Mardis E."/>
            <person name="Menezes S."/>
            <person name="Mouser L."/>
            <person name="Nhan M."/>
            <person name="Rifkin L."/>
            <person name="Riles L."/>
            <person name="St Peter H."/>
            <person name="Trevaskis E."/>
            <person name="Vaughan K."/>
            <person name="Vignati D."/>
            <person name="Wilcox L."/>
            <person name="Wohldman P."/>
            <person name="Waterston R."/>
            <person name="Wilson R."/>
            <person name="Vaudin M."/>
        </authorList>
    </citation>
    <scope>NUCLEOTIDE SEQUENCE [LARGE SCALE GENOMIC DNA]</scope>
    <source>
        <strain>ATCC 204508 / S288c</strain>
    </source>
</reference>
<reference key="3">
    <citation type="journal article" date="2014" name="G3 (Bethesda)">
        <title>The reference genome sequence of Saccharomyces cerevisiae: Then and now.</title>
        <authorList>
            <person name="Engel S.R."/>
            <person name="Dietrich F.S."/>
            <person name="Fisk D.G."/>
            <person name="Binkley G."/>
            <person name="Balakrishnan R."/>
            <person name="Costanzo M.C."/>
            <person name="Dwight S.S."/>
            <person name="Hitz B.C."/>
            <person name="Karra K."/>
            <person name="Nash R.S."/>
            <person name="Weng S."/>
            <person name="Wong E.D."/>
            <person name="Lloyd P."/>
            <person name="Skrzypek M.S."/>
            <person name="Miyasato S.R."/>
            <person name="Simison M."/>
            <person name="Cherry J.M."/>
        </authorList>
    </citation>
    <scope>GENOME REANNOTATION</scope>
    <source>
        <strain>ATCC 204508 / S288c</strain>
    </source>
</reference>
<reference key="4">
    <citation type="journal article" date="1988" name="Mol. Cell. Biol.">
        <title>A regulatory region responsible for proline-specific induction of the yeast PUT2 gene is adjacent to its TATA box.</title>
        <authorList>
            <person name="Siddiqui A.H."/>
            <person name="Brandriss M.C."/>
        </authorList>
    </citation>
    <scope>NUCLEOTIDE SEQUENCE [GENOMIC DNA] OF 1-3</scope>
</reference>
<reference key="5">
    <citation type="journal article" date="2001" name="Biochemistry">
        <title>Yeast mitochondrial dehydrogenases are associated in a supramolecular complex.</title>
        <authorList>
            <person name="Grandier-Vazeille X."/>
            <person name="Bathany K."/>
            <person name="Chaignepain S."/>
            <person name="Camougrand N."/>
            <person name="Manon S."/>
            <person name="Schmitter J.-M."/>
        </authorList>
    </citation>
    <scope>SUBCELLULAR LOCATION</scope>
</reference>
<reference key="6">
    <citation type="journal article" date="2003" name="Nature">
        <title>Global analysis of protein expression in yeast.</title>
        <authorList>
            <person name="Ghaemmaghami S."/>
            <person name="Huh W.-K."/>
            <person name="Bower K."/>
            <person name="Howson R.W."/>
            <person name="Belle A."/>
            <person name="Dephoure N."/>
            <person name="O'Shea E.K."/>
            <person name="Weissman J.S."/>
        </authorList>
    </citation>
    <scope>LEVEL OF PROTEIN EXPRESSION [LARGE SCALE ANALYSIS]</scope>
</reference>
<protein>
    <recommendedName>
        <fullName>Delta-1-pyrroline-5-carboxylate dehydrogenase, mitochondrial</fullName>
        <shortName>P5C dehydrogenase</shortName>
        <ecNumber>1.2.1.88</ecNumber>
    </recommendedName>
    <alternativeName>
        <fullName>L-glutamate gamma-semialdehyde dehydrogenase</fullName>
    </alternativeName>
</protein>
<proteinExistence type="evidence at protein level"/>